<name>SCTM1_HUMAN</name>
<proteinExistence type="evidence at protein level"/>
<feature type="signal peptide" evidence="1">
    <location>
        <begin position="1"/>
        <end position="28"/>
    </location>
</feature>
<feature type="chain" id="PRO_0000022286" description="Secreted and transmembrane protein 1">
    <location>
        <begin position="29"/>
        <end position="248"/>
    </location>
</feature>
<feature type="topological domain" description="Extracellular" evidence="1">
    <location>
        <begin position="29"/>
        <end position="145"/>
    </location>
</feature>
<feature type="transmembrane region" description="Helical" evidence="1">
    <location>
        <begin position="146"/>
        <end position="166"/>
    </location>
</feature>
<feature type="topological domain" description="Cytoplasmic" evidence="1">
    <location>
        <begin position="167"/>
        <end position="248"/>
    </location>
</feature>
<feature type="glycosylation site" description="N-linked (GlcNAc...) asparagine" evidence="1">
    <location>
        <position position="56"/>
    </location>
</feature>
<feature type="disulfide bond" evidence="1">
    <location>
        <begin position="38"/>
        <end position="55"/>
    </location>
</feature>
<feature type="sequence conflict" description="In Ref. 4; AAH17716." evidence="5" ref="4">
    <original>V</original>
    <variation>F</variation>
    <location>
        <position position="191"/>
    </location>
</feature>
<reference key="1">
    <citation type="journal article" date="1998" name="Genomics">
        <title>Identification and characterization of K12 (SECTM1), a novel human gene that encodes a Golgi-associated protein with transmembrane and secreted isoforms.</title>
        <authorList>
            <person name="Slentz-Kesler K.A."/>
            <person name="Hale L.P."/>
            <person name="Kaufman R.E."/>
        </authorList>
    </citation>
    <scope>NUCLEOTIDE SEQUENCE [MRNA]</scope>
    <scope>SUBCELLULAR LOCATION</scope>
    <scope>TISSUE SPECIFICITY</scope>
</reference>
<reference key="2">
    <citation type="journal article" date="2004" name="Nat. Genet.">
        <title>Complete sequencing and characterization of 21,243 full-length human cDNAs.</title>
        <authorList>
            <person name="Ota T."/>
            <person name="Suzuki Y."/>
            <person name="Nishikawa T."/>
            <person name="Otsuki T."/>
            <person name="Sugiyama T."/>
            <person name="Irie R."/>
            <person name="Wakamatsu A."/>
            <person name="Hayashi K."/>
            <person name="Sato H."/>
            <person name="Nagai K."/>
            <person name="Kimura K."/>
            <person name="Makita H."/>
            <person name="Sekine M."/>
            <person name="Obayashi M."/>
            <person name="Nishi T."/>
            <person name="Shibahara T."/>
            <person name="Tanaka T."/>
            <person name="Ishii S."/>
            <person name="Yamamoto J."/>
            <person name="Saito K."/>
            <person name="Kawai Y."/>
            <person name="Isono Y."/>
            <person name="Nakamura Y."/>
            <person name="Nagahari K."/>
            <person name="Murakami K."/>
            <person name="Yasuda T."/>
            <person name="Iwayanagi T."/>
            <person name="Wagatsuma M."/>
            <person name="Shiratori A."/>
            <person name="Sudo H."/>
            <person name="Hosoiri T."/>
            <person name="Kaku Y."/>
            <person name="Kodaira H."/>
            <person name="Kondo H."/>
            <person name="Sugawara M."/>
            <person name="Takahashi M."/>
            <person name="Kanda K."/>
            <person name="Yokoi T."/>
            <person name="Furuya T."/>
            <person name="Kikkawa E."/>
            <person name="Omura Y."/>
            <person name="Abe K."/>
            <person name="Kamihara K."/>
            <person name="Katsuta N."/>
            <person name="Sato K."/>
            <person name="Tanikawa M."/>
            <person name="Yamazaki M."/>
            <person name="Ninomiya K."/>
            <person name="Ishibashi T."/>
            <person name="Yamashita H."/>
            <person name="Murakawa K."/>
            <person name="Fujimori K."/>
            <person name="Tanai H."/>
            <person name="Kimata M."/>
            <person name="Watanabe M."/>
            <person name="Hiraoka S."/>
            <person name="Chiba Y."/>
            <person name="Ishida S."/>
            <person name="Ono Y."/>
            <person name="Takiguchi S."/>
            <person name="Watanabe S."/>
            <person name="Yosida M."/>
            <person name="Hotuta T."/>
            <person name="Kusano J."/>
            <person name="Kanehori K."/>
            <person name="Takahashi-Fujii A."/>
            <person name="Hara H."/>
            <person name="Tanase T.-O."/>
            <person name="Nomura Y."/>
            <person name="Togiya S."/>
            <person name="Komai F."/>
            <person name="Hara R."/>
            <person name="Takeuchi K."/>
            <person name="Arita M."/>
            <person name="Imose N."/>
            <person name="Musashino K."/>
            <person name="Yuuki H."/>
            <person name="Oshima A."/>
            <person name="Sasaki N."/>
            <person name="Aotsuka S."/>
            <person name="Yoshikawa Y."/>
            <person name="Matsunawa H."/>
            <person name="Ichihara T."/>
            <person name="Shiohata N."/>
            <person name="Sano S."/>
            <person name="Moriya S."/>
            <person name="Momiyama H."/>
            <person name="Satoh N."/>
            <person name="Takami S."/>
            <person name="Terashima Y."/>
            <person name="Suzuki O."/>
            <person name="Nakagawa S."/>
            <person name="Senoh A."/>
            <person name="Mizoguchi H."/>
            <person name="Goto Y."/>
            <person name="Shimizu F."/>
            <person name="Wakebe H."/>
            <person name="Hishigaki H."/>
            <person name="Watanabe T."/>
            <person name="Sugiyama A."/>
            <person name="Takemoto M."/>
            <person name="Kawakami B."/>
            <person name="Yamazaki M."/>
            <person name="Watanabe K."/>
            <person name="Kumagai A."/>
            <person name="Itakura S."/>
            <person name="Fukuzumi Y."/>
            <person name="Fujimori Y."/>
            <person name="Komiyama M."/>
            <person name="Tashiro H."/>
            <person name="Tanigami A."/>
            <person name="Fujiwara T."/>
            <person name="Ono T."/>
            <person name="Yamada K."/>
            <person name="Fujii Y."/>
            <person name="Ozaki K."/>
            <person name="Hirao M."/>
            <person name="Ohmori Y."/>
            <person name="Kawabata A."/>
            <person name="Hikiji T."/>
            <person name="Kobatake N."/>
            <person name="Inagaki H."/>
            <person name="Ikema Y."/>
            <person name="Okamoto S."/>
            <person name="Okitani R."/>
            <person name="Kawakami T."/>
            <person name="Noguchi S."/>
            <person name="Itoh T."/>
            <person name="Shigeta K."/>
            <person name="Senba T."/>
            <person name="Matsumura K."/>
            <person name="Nakajima Y."/>
            <person name="Mizuno T."/>
            <person name="Morinaga M."/>
            <person name="Sasaki M."/>
            <person name="Togashi T."/>
            <person name="Oyama M."/>
            <person name="Hata H."/>
            <person name="Watanabe M."/>
            <person name="Komatsu T."/>
            <person name="Mizushima-Sugano J."/>
            <person name="Satoh T."/>
            <person name="Shirai Y."/>
            <person name="Takahashi Y."/>
            <person name="Nakagawa K."/>
            <person name="Okumura K."/>
            <person name="Nagase T."/>
            <person name="Nomura N."/>
            <person name="Kikuchi H."/>
            <person name="Masuho Y."/>
            <person name="Yamashita R."/>
            <person name="Nakai K."/>
            <person name="Yada T."/>
            <person name="Nakamura Y."/>
            <person name="Ohara O."/>
            <person name="Isogai T."/>
            <person name="Sugano S."/>
        </authorList>
    </citation>
    <scope>NUCLEOTIDE SEQUENCE [LARGE SCALE MRNA]</scope>
    <source>
        <tissue>Urinary bladder</tissue>
    </source>
</reference>
<reference key="3">
    <citation type="submission" date="2005-07" db="EMBL/GenBank/DDBJ databases">
        <authorList>
            <person name="Mural R.J."/>
            <person name="Istrail S."/>
            <person name="Sutton G.G."/>
            <person name="Florea L."/>
            <person name="Halpern A.L."/>
            <person name="Mobarry C.M."/>
            <person name="Lippert R."/>
            <person name="Walenz B."/>
            <person name="Shatkay H."/>
            <person name="Dew I."/>
            <person name="Miller J.R."/>
            <person name="Flanigan M.J."/>
            <person name="Edwards N.J."/>
            <person name="Bolanos R."/>
            <person name="Fasulo D."/>
            <person name="Halldorsson B.V."/>
            <person name="Hannenhalli S."/>
            <person name="Turner R."/>
            <person name="Yooseph S."/>
            <person name="Lu F."/>
            <person name="Nusskern D.R."/>
            <person name="Shue B.C."/>
            <person name="Zheng X.H."/>
            <person name="Zhong F."/>
            <person name="Delcher A.L."/>
            <person name="Huson D.H."/>
            <person name="Kravitz S.A."/>
            <person name="Mouchard L."/>
            <person name="Reinert K."/>
            <person name="Remington K.A."/>
            <person name="Clark A.G."/>
            <person name="Waterman M.S."/>
            <person name="Eichler E.E."/>
            <person name="Adams M.D."/>
            <person name="Hunkapiller M.W."/>
            <person name="Myers E.W."/>
            <person name="Venter J.C."/>
        </authorList>
    </citation>
    <scope>NUCLEOTIDE SEQUENCE [LARGE SCALE GENOMIC DNA]</scope>
</reference>
<reference key="4">
    <citation type="journal article" date="2004" name="Genome Res.">
        <title>The status, quality, and expansion of the NIH full-length cDNA project: the Mammalian Gene Collection (MGC).</title>
        <authorList>
            <consortium name="The MGC Project Team"/>
        </authorList>
    </citation>
    <scope>NUCLEOTIDE SEQUENCE [LARGE SCALE MRNA]</scope>
    <source>
        <tissue>Liver</tissue>
    </source>
</reference>
<reference key="5">
    <citation type="journal article" date="2000" name="J. Biol. Chem.">
        <title>Identification of CD7 as a cognate of the human K12 (SECTM1) protein.</title>
        <authorList>
            <person name="Lyman S.D."/>
            <person name="Escobar S."/>
            <person name="Rousseau A.-M."/>
            <person name="Armstrong A."/>
            <person name="Fanslow W.C."/>
        </authorList>
    </citation>
    <scope>INTERACTION WITH CD7</scope>
    <scope>SUBCELLULAR LOCATION</scope>
</reference>
<reference key="6">
    <citation type="journal article" date="2005" name="J. Clin. Immunol.">
        <title>Expression of the CD7 ligand K-12 in human thymic epithelial cells: regulation by IFN-gamma.</title>
        <authorList>
            <person name="Lam G.K."/>
            <person name="Liao H.X."/>
            <person name="Xue Y."/>
            <person name="Alam S.M."/>
            <person name="Scearce R.M."/>
            <person name="Kaufman R.E."/>
            <person name="Sempowski G.D."/>
            <person name="Haynes B.F."/>
        </authorList>
    </citation>
    <scope>INTERACTION WITH CD7</scope>
    <scope>TISSUE SPECIFICITY</scope>
    <scope>INDUCTION BY IFNG</scope>
    <scope>FUNCTION</scope>
</reference>
<protein>
    <recommendedName>
        <fullName>Secreted and transmembrane protein 1</fullName>
    </recommendedName>
    <alternativeName>
        <fullName>Protein K-12</fullName>
    </alternativeName>
</protein>
<dbReference type="EMBL" id="U77643">
    <property type="protein sequence ID" value="AAC52044.1"/>
    <property type="molecule type" value="mRNA"/>
</dbReference>
<dbReference type="EMBL" id="AK312980">
    <property type="protein sequence ID" value="BAG35817.1"/>
    <property type="molecule type" value="mRNA"/>
</dbReference>
<dbReference type="EMBL" id="CH471099">
    <property type="protein sequence ID" value="EAW89766.1"/>
    <property type="molecule type" value="Genomic_DNA"/>
</dbReference>
<dbReference type="EMBL" id="BC017716">
    <property type="protein sequence ID" value="AAH17716.1"/>
    <property type="molecule type" value="mRNA"/>
</dbReference>
<dbReference type="CCDS" id="CCDS11808.1"/>
<dbReference type="RefSeq" id="NP_002995.1">
    <property type="nucleotide sequence ID" value="NM_003004.3"/>
</dbReference>
<dbReference type="RefSeq" id="XP_005256449.1">
    <property type="nucleotide sequence ID" value="XM_005256392.4"/>
</dbReference>
<dbReference type="RefSeq" id="XP_011521890.1">
    <property type="nucleotide sequence ID" value="XM_011523588.2"/>
</dbReference>
<dbReference type="RefSeq" id="XP_054172860.1">
    <property type="nucleotide sequence ID" value="XM_054316885.1"/>
</dbReference>
<dbReference type="RefSeq" id="XP_054172861.1">
    <property type="nucleotide sequence ID" value="XM_054316886.1"/>
</dbReference>
<dbReference type="SMR" id="Q8WVN6"/>
<dbReference type="BioGRID" id="112298">
    <property type="interactions" value="24"/>
</dbReference>
<dbReference type="FunCoup" id="Q8WVN6">
    <property type="interactions" value="32"/>
</dbReference>
<dbReference type="IntAct" id="Q8WVN6">
    <property type="interactions" value="9"/>
</dbReference>
<dbReference type="STRING" id="9606.ENSP00000269389"/>
<dbReference type="GlyCosmos" id="Q8WVN6">
    <property type="glycosylation" value="1 site, No reported glycans"/>
</dbReference>
<dbReference type="GlyGen" id="Q8WVN6">
    <property type="glycosylation" value="1 site"/>
</dbReference>
<dbReference type="iPTMnet" id="Q8WVN6"/>
<dbReference type="PhosphoSitePlus" id="Q8WVN6"/>
<dbReference type="SwissPalm" id="Q8WVN6"/>
<dbReference type="BioMuta" id="SECTM1"/>
<dbReference type="DMDM" id="25009245"/>
<dbReference type="jPOST" id="Q8WVN6"/>
<dbReference type="MassIVE" id="Q8WVN6"/>
<dbReference type="PaxDb" id="9606-ENSP00000269389"/>
<dbReference type="PeptideAtlas" id="Q8WVN6"/>
<dbReference type="ProteomicsDB" id="74806"/>
<dbReference type="Pumba" id="Q8WVN6"/>
<dbReference type="Antibodypedia" id="32999">
    <property type="antibodies" value="109 antibodies from 21 providers"/>
</dbReference>
<dbReference type="DNASU" id="6398"/>
<dbReference type="Ensembl" id="ENST00000269389.8">
    <property type="protein sequence ID" value="ENSP00000269389.3"/>
    <property type="gene ID" value="ENSG00000141574.8"/>
</dbReference>
<dbReference type="GeneID" id="6398"/>
<dbReference type="KEGG" id="hsa:6398"/>
<dbReference type="MANE-Select" id="ENST00000269389.8">
    <property type="protein sequence ID" value="ENSP00000269389.3"/>
    <property type="RefSeq nucleotide sequence ID" value="NM_003004.3"/>
    <property type="RefSeq protein sequence ID" value="NP_002995.1"/>
</dbReference>
<dbReference type="UCSC" id="uc002keo.4">
    <property type="organism name" value="human"/>
</dbReference>
<dbReference type="AGR" id="HGNC:10707"/>
<dbReference type="CTD" id="6398"/>
<dbReference type="DisGeNET" id="6398"/>
<dbReference type="GeneCards" id="SECTM1"/>
<dbReference type="HGNC" id="HGNC:10707">
    <property type="gene designation" value="SECTM1"/>
</dbReference>
<dbReference type="HPA" id="ENSG00000141574">
    <property type="expression patterns" value="Tissue enhanced (intestine)"/>
</dbReference>
<dbReference type="MIM" id="602602">
    <property type="type" value="gene"/>
</dbReference>
<dbReference type="neXtProt" id="NX_Q8WVN6"/>
<dbReference type="OpenTargets" id="ENSG00000141574"/>
<dbReference type="PharmGKB" id="PA35630"/>
<dbReference type="VEuPathDB" id="HostDB:ENSG00000141574"/>
<dbReference type="eggNOG" id="ENOG502TM1B">
    <property type="taxonomic scope" value="Eukaryota"/>
</dbReference>
<dbReference type="GeneTree" id="ENSGT00530000064499"/>
<dbReference type="InParanoid" id="Q8WVN6"/>
<dbReference type="OMA" id="LWTPDSE"/>
<dbReference type="OrthoDB" id="9451016at2759"/>
<dbReference type="PAN-GO" id="Q8WVN6">
    <property type="GO annotations" value="1 GO annotation based on evolutionary models"/>
</dbReference>
<dbReference type="PhylomeDB" id="Q8WVN6"/>
<dbReference type="TreeFam" id="TF336992"/>
<dbReference type="PathwayCommons" id="Q8WVN6"/>
<dbReference type="SignaLink" id="Q8WVN6"/>
<dbReference type="BioGRID-ORCS" id="6398">
    <property type="hits" value="20 hits in 1151 CRISPR screens"/>
</dbReference>
<dbReference type="ChiTaRS" id="SECTM1">
    <property type="organism name" value="human"/>
</dbReference>
<dbReference type="GeneWiki" id="SECTM1"/>
<dbReference type="GenomeRNAi" id="6398"/>
<dbReference type="Pharos" id="Q8WVN6">
    <property type="development level" value="Tbio"/>
</dbReference>
<dbReference type="PRO" id="PR:Q8WVN6"/>
<dbReference type="Proteomes" id="UP000005640">
    <property type="component" value="Chromosome 17"/>
</dbReference>
<dbReference type="RNAct" id="Q8WVN6">
    <property type="molecule type" value="protein"/>
</dbReference>
<dbReference type="Bgee" id="ENSG00000141574">
    <property type="expression patterns" value="Expressed in monocyte and 159 other cell types or tissues"/>
</dbReference>
<dbReference type="ExpressionAtlas" id="Q8WVN6">
    <property type="expression patterns" value="baseline and differential"/>
</dbReference>
<dbReference type="GO" id="GO:0070062">
    <property type="term" value="C:extracellular exosome"/>
    <property type="evidence" value="ECO:0007005"/>
    <property type="project" value="UniProtKB"/>
</dbReference>
<dbReference type="GO" id="GO:0005615">
    <property type="term" value="C:extracellular space"/>
    <property type="evidence" value="ECO:0000304"/>
    <property type="project" value="ProtInc"/>
</dbReference>
<dbReference type="GO" id="GO:0005794">
    <property type="term" value="C:Golgi apparatus"/>
    <property type="evidence" value="ECO:0000304"/>
    <property type="project" value="ProtInc"/>
</dbReference>
<dbReference type="GO" id="GO:0016020">
    <property type="term" value="C:membrane"/>
    <property type="evidence" value="ECO:0000314"/>
    <property type="project" value="CACAO"/>
</dbReference>
<dbReference type="GO" id="GO:0005886">
    <property type="term" value="C:plasma membrane"/>
    <property type="evidence" value="ECO:0000314"/>
    <property type="project" value="UniProt"/>
</dbReference>
<dbReference type="GO" id="GO:0005125">
    <property type="term" value="F:cytokine activity"/>
    <property type="evidence" value="ECO:0000304"/>
    <property type="project" value="ProtInc"/>
</dbReference>
<dbReference type="GO" id="GO:0048018">
    <property type="term" value="F:receptor ligand activity"/>
    <property type="evidence" value="ECO:0000314"/>
    <property type="project" value="UniProt"/>
</dbReference>
<dbReference type="GO" id="GO:0006955">
    <property type="term" value="P:immune response"/>
    <property type="evidence" value="ECO:0000304"/>
    <property type="project" value="ProtInc"/>
</dbReference>
<dbReference type="GO" id="GO:0007498">
    <property type="term" value="P:mesoderm development"/>
    <property type="evidence" value="ECO:0000304"/>
    <property type="project" value="ProtInc"/>
</dbReference>
<dbReference type="GO" id="GO:0043123">
    <property type="term" value="P:positive regulation of canonical NF-kappaB signal transduction"/>
    <property type="evidence" value="ECO:0007001"/>
    <property type="project" value="UniProtKB"/>
</dbReference>
<dbReference type="GO" id="GO:0002726">
    <property type="term" value="P:positive regulation of T cell cytokine production"/>
    <property type="evidence" value="ECO:0000314"/>
    <property type="project" value="UniProt"/>
</dbReference>
<dbReference type="FunFam" id="2.60.40.10:FF:002054">
    <property type="entry name" value="Secreted and transmembrane protein 1"/>
    <property type="match status" value="1"/>
</dbReference>
<dbReference type="Gene3D" id="2.60.40.10">
    <property type="entry name" value="Immunoglobulins"/>
    <property type="match status" value="1"/>
</dbReference>
<dbReference type="InterPro" id="IPR013783">
    <property type="entry name" value="Ig-like_fold"/>
</dbReference>
<dbReference type="InterPro" id="IPR033231">
    <property type="entry name" value="SECTM1"/>
</dbReference>
<dbReference type="PANTHER" id="PTHR15123">
    <property type="entry name" value="SECRETED AND TRANSMEMBRANE PROTEIN 1"/>
    <property type="match status" value="1"/>
</dbReference>
<dbReference type="PANTHER" id="PTHR15123:SF5">
    <property type="entry name" value="SECRETED AND TRANSMEMBRANE PROTEIN 1"/>
    <property type="match status" value="1"/>
</dbReference>
<organism>
    <name type="scientific">Homo sapiens</name>
    <name type="common">Human</name>
    <dbReference type="NCBI Taxonomy" id="9606"/>
    <lineage>
        <taxon>Eukaryota</taxon>
        <taxon>Metazoa</taxon>
        <taxon>Chordata</taxon>
        <taxon>Craniata</taxon>
        <taxon>Vertebrata</taxon>
        <taxon>Euteleostomi</taxon>
        <taxon>Mammalia</taxon>
        <taxon>Eutheria</taxon>
        <taxon>Euarchontoglires</taxon>
        <taxon>Primates</taxon>
        <taxon>Haplorrhini</taxon>
        <taxon>Catarrhini</taxon>
        <taxon>Hominidae</taxon>
        <taxon>Homo</taxon>
    </lineage>
</organism>
<accession>Q8WVN6</accession>
<accession>B2R7H0</accession>
<accession>O00466</accession>
<sequence>MQTCPLAFPGHVSQALGTLLFLAASLSAQNEGWDSPICTEGVVSVSWGENTVMSCNISNAFSHVNIKLRAHGQESAIFNEVAPGYFSRDGWQLQVQGGVAQLVIKGARDSHAGLYMWHLVGHQRNNRQVTLEVSGAEPQSAPDTGFWPVPAVVTAVFILLVALVMFAWYRCRCSQQRREKKFFLLEPQMKVAALRAGAQQGLSRASAELWTPDSEPTPRPLALVFKPSPLGALELLSPQPLFPYAADP</sequence>
<comment type="function">
    <text evidence="3">May be involved in thymocyte signaling.</text>
</comment>
<comment type="subunit">
    <text evidence="2 3">Interacts with CD7.</text>
</comment>
<comment type="interaction">
    <interactant intactId="EBI-2855289">
        <id>Q8WVN6</id>
    </interactant>
    <interactant intactId="EBI-12109402">
        <id>Q86W74-2</id>
        <label>ANKRD46</label>
    </interactant>
    <organismsDiffer>false</organismsDiffer>
    <experiments>3</experiments>
</comment>
<comment type="interaction">
    <interactant intactId="EBI-2855289">
        <id>Q8WVN6</id>
    </interactant>
    <interactant intactId="EBI-3907816">
        <id>P54852</id>
        <label>EMP3</label>
    </interactant>
    <organismsDiffer>false</organismsDiffer>
    <experiments>3</experiments>
</comment>
<comment type="subcellular location">
    <subcellularLocation>
        <location evidence="5">Cell membrane</location>
        <topology evidence="5">Single-pass type I membrane protein</topology>
    </subcellularLocation>
    <subcellularLocation>
        <location>Secreted</location>
    </subcellularLocation>
</comment>
<comment type="tissue specificity">
    <text evidence="3 4">Detected at the highest levels in peripheral blood leukocytes and breast cancer cell lines. Found in leukocytes of the myeloid lineage, with the strongest expression observed in granulocytes and no detectable expression in lymphocytes. Expressed in thymic epithelial cells and fibroblasts.</text>
</comment>
<comment type="induction">
    <text evidence="3">By IFNG/IFN-gamma (at protein level).</text>
</comment>
<comment type="similarity">
    <text evidence="5">Belongs to the SECTM family.</text>
</comment>
<evidence type="ECO:0000255" key="1"/>
<evidence type="ECO:0000269" key="2">
    <source>
    </source>
</evidence>
<evidence type="ECO:0000269" key="3">
    <source>
    </source>
</evidence>
<evidence type="ECO:0000269" key="4">
    <source>
    </source>
</evidence>
<evidence type="ECO:0000305" key="5"/>
<gene>
    <name type="primary">SECTM1</name>
    <name type="synonym">K12</name>
</gene>
<keyword id="KW-1003">Cell membrane</keyword>
<keyword id="KW-1015">Disulfide bond</keyword>
<keyword id="KW-0325">Glycoprotein</keyword>
<keyword id="KW-0472">Membrane</keyword>
<keyword id="KW-1267">Proteomics identification</keyword>
<keyword id="KW-1185">Reference proteome</keyword>
<keyword id="KW-0964">Secreted</keyword>
<keyword id="KW-0732">Signal</keyword>
<keyword id="KW-0812">Transmembrane</keyword>
<keyword id="KW-1133">Transmembrane helix</keyword>